<organism>
    <name type="scientific">Bos taurus</name>
    <name type="common">Bovine</name>
    <dbReference type="NCBI Taxonomy" id="9913"/>
    <lineage>
        <taxon>Eukaryota</taxon>
        <taxon>Metazoa</taxon>
        <taxon>Chordata</taxon>
        <taxon>Craniata</taxon>
        <taxon>Vertebrata</taxon>
        <taxon>Euteleostomi</taxon>
        <taxon>Mammalia</taxon>
        <taxon>Eutheria</taxon>
        <taxon>Laurasiatheria</taxon>
        <taxon>Artiodactyla</taxon>
        <taxon>Ruminantia</taxon>
        <taxon>Pecora</taxon>
        <taxon>Bovidae</taxon>
        <taxon>Bovinae</taxon>
        <taxon>Bos</taxon>
    </lineage>
</organism>
<accession>Q05B63</accession>
<comment type="function">
    <text evidence="1">Catalytic subunit of the TRMT11-TRM112 methyltransferase complex, that specifically mediates the S-adenosyl-L-methionine-dependent N(2)-methylation of guanosine nucleotide at position 10 (m2G10) in tRNAs. This is one of the major tRNA (guanine-N(2))-methyltransferases.</text>
</comment>
<comment type="catalytic activity">
    <reaction evidence="1">
        <text>guanosine(10) in tRNA + S-adenosyl-L-methionine = N(2)-methylguanosine(10) in tRNA + S-adenosyl-L-homocysteine + H(+)</text>
        <dbReference type="Rhea" id="RHEA:43128"/>
        <dbReference type="Rhea" id="RHEA-COMP:10355"/>
        <dbReference type="Rhea" id="RHEA-COMP:10357"/>
        <dbReference type="ChEBI" id="CHEBI:15378"/>
        <dbReference type="ChEBI" id="CHEBI:57856"/>
        <dbReference type="ChEBI" id="CHEBI:59789"/>
        <dbReference type="ChEBI" id="CHEBI:74269"/>
        <dbReference type="ChEBI" id="CHEBI:74481"/>
        <dbReference type="EC" id="2.1.1.214"/>
    </reaction>
    <physiologicalReaction direction="left-to-right" evidence="1">
        <dbReference type="Rhea" id="RHEA:43129"/>
    </physiologicalReaction>
</comment>
<comment type="subunit">
    <text evidence="1">Part of the heterodimeric TRMT11-TRM112 methyltransferase complex; this complex forms an active tRNA methyltransferase, where TRMT112 acts as an activator of the catalytic subunit TRMT11.</text>
</comment>
<comment type="subcellular location">
    <subcellularLocation>
        <location evidence="1">Cytoplasm</location>
    </subcellularLocation>
</comment>
<comment type="similarity">
    <text evidence="2">Belongs to the class I-like SAM-binding methyltransferase superfamily. TRM11 methyltransferase family.</text>
</comment>
<feature type="initiator methionine" description="Removed" evidence="1">
    <location>
        <position position="1"/>
    </location>
</feature>
<feature type="chain" id="PRO_0000328118" description="tRNA (guanine(10)-N(2))-methyltransferase TRMT11">
    <location>
        <begin position="2"/>
        <end position="460"/>
    </location>
</feature>
<feature type="modified residue" description="N-acetylalanine" evidence="1">
    <location>
        <position position="2"/>
    </location>
</feature>
<dbReference type="EC" id="2.1.1.214" evidence="1"/>
<dbReference type="EMBL" id="BC122733">
    <property type="protein sequence ID" value="AAI22734.1"/>
    <property type="molecule type" value="mRNA"/>
</dbReference>
<dbReference type="RefSeq" id="NP_001073742.1">
    <property type="nucleotide sequence ID" value="NM_001080273.2"/>
</dbReference>
<dbReference type="SMR" id="Q05B63"/>
<dbReference type="FunCoup" id="Q05B63">
    <property type="interactions" value="1376"/>
</dbReference>
<dbReference type="STRING" id="9913.ENSBTAP00000064921"/>
<dbReference type="PaxDb" id="9913-ENSBTAP00000002544"/>
<dbReference type="GeneID" id="514867"/>
<dbReference type="KEGG" id="bta:514867"/>
<dbReference type="CTD" id="60487"/>
<dbReference type="eggNOG" id="KOG2671">
    <property type="taxonomic scope" value="Eukaryota"/>
</dbReference>
<dbReference type="HOGENOM" id="CLU_029646_0_0_1"/>
<dbReference type="InParanoid" id="Q05B63"/>
<dbReference type="OrthoDB" id="296065at2759"/>
<dbReference type="TreeFam" id="TF106161"/>
<dbReference type="Proteomes" id="UP000009136">
    <property type="component" value="Unplaced"/>
</dbReference>
<dbReference type="GO" id="GO:0005737">
    <property type="term" value="C:cytoplasm"/>
    <property type="evidence" value="ECO:0000250"/>
    <property type="project" value="UniProtKB"/>
</dbReference>
<dbReference type="GO" id="GO:0043528">
    <property type="term" value="C:tRNA (m2G10) methyltransferase complex"/>
    <property type="evidence" value="ECO:0000250"/>
    <property type="project" value="UniProtKB"/>
</dbReference>
<dbReference type="GO" id="GO:0008168">
    <property type="term" value="F:methyltransferase activity"/>
    <property type="evidence" value="ECO:0000318"/>
    <property type="project" value="GO_Central"/>
</dbReference>
<dbReference type="GO" id="GO:0160102">
    <property type="term" value="F:tRNA (guanine(10)-N2)-methyltransferase activity"/>
    <property type="evidence" value="ECO:0000250"/>
    <property type="project" value="UniProtKB"/>
</dbReference>
<dbReference type="GO" id="GO:0000049">
    <property type="term" value="F:tRNA binding"/>
    <property type="evidence" value="ECO:0007669"/>
    <property type="project" value="UniProtKB-KW"/>
</dbReference>
<dbReference type="GO" id="GO:0032259">
    <property type="term" value="P:methylation"/>
    <property type="evidence" value="ECO:0007669"/>
    <property type="project" value="UniProtKB-KW"/>
</dbReference>
<dbReference type="GO" id="GO:0008033">
    <property type="term" value="P:tRNA processing"/>
    <property type="evidence" value="ECO:0007669"/>
    <property type="project" value="UniProtKB-KW"/>
</dbReference>
<dbReference type="CDD" id="cd02440">
    <property type="entry name" value="AdoMet_MTases"/>
    <property type="match status" value="1"/>
</dbReference>
<dbReference type="FunFam" id="3.40.50.150:FF:000069">
    <property type="entry name" value="tRNA (Guanine(10)-N2)-methyltransferase homolog isoform X2"/>
    <property type="match status" value="1"/>
</dbReference>
<dbReference type="Gene3D" id="3.40.50.150">
    <property type="entry name" value="Vaccinia Virus protein VP39"/>
    <property type="match status" value="1"/>
</dbReference>
<dbReference type="InterPro" id="IPR002052">
    <property type="entry name" value="DNA_methylase_N6_adenine_CS"/>
</dbReference>
<dbReference type="InterPro" id="IPR000241">
    <property type="entry name" value="RlmKL-like_Mtase"/>
</dbReference>
<dbReference type="InterPro" id="IPR029063">
    <property type="entry name" value="SAM-dependent_MTases_sf"/>
</dbReference>
<dbReference type="InterPro" id="IPR016691">
    <property type="entry name" value="tRNA_mtfrase_TRM11"/>
</dbReference>
<dbReference type="PANTHER" id="PTHR13370">
    <property type="entry name" value="RNA METHYLASE-RELATED"/>
    <property type="match status" value="1"/>
</dbReference>
<dbReference type="PANTHER" id="PTHR13370:SF3">
    <property type="entry name" value="TRNA (GUANINE(10)-N2)-METHYLTRANSFERASE HOMOLOG"/>
    <property type="match status" value="1"/>
</dbReference>
<dbReference type="Pfam" id="PF01170">
    <property type="entry name" value="UPF0020"/>
    <property type="match status" value="1"/>
</dbReference>
<dbReference type="PIRSF" id="PIRSF017259">
    <property type="entry name" value="tRNA_mtfrase_TRM11"/>
    <property type="match status" value="1"/>
</dbReference>
<dbReference type="PRINTS" id="PR00507">
    <property type="entry name" value="N12N6MTFRASE"/>
</dbReference>
<dbReference type="SUPFAM" id="SSF53335">
    <property type="entry name" value="S-adenosyl-L-methionine-dependent methyltransferases"/>
    <property type="match status" value="1"/>
</dbReference>
<dbReference type="PROSITE" id="PS00092">
    <property type="entry name" value="N6_MTASE"/>
    <property type="match status" value="1"/>
</dbReference>
<dbReference type="PROSITE" id="PS51627">
    <property type="entry name" value="SAM_MT_TRM11"/>
    <property type="match status" value="1"/>
</dbReference>
<gene>
    <name evidence="1" type="primary">TRMT11</name>
</gene>
<name>TRM11_BOVIN</name>
<reference key="1">
    <citation type="submission" date="2006-08" db="EMBL/GenBank/DDBJ databases">
        <authorList>
            <consortium name="NIH - Mammalian Gene Collection (MGC) project"/>
        </authorList>
    </citation>
    <scope>NUCLEOTIDE SEQUENCE [LARGE SCALE MRNA]</scope>
    <source>
        <strain>Hereford</strain>
        <tissue>Hypothalamus</tissue>
    </source>
</reference>
<keyword id="KW-0007">Acetylation</keyword>
<keyword id="KW-0963">Cytoplasm</keyword>
<keyword id="KW-0489">Methyltransferase</keyword>
<keyword id="KW-1185">Reference proteome</keyword>
<keyword id="KW-0694">RNA-binding</keyword>
<keyword id="KW-0949">S-adenosyl-L-methionine</keyword>
<keyword id="KW-0808">Transferase</keyword>
<keyword id="KW-0819">tRNA processing</keyword>
<keyword id="KW-0820">tRNA-binding</keyword>
<evidence type="ECO:0000250" key="1">
    <source>
        <dbReference type="UniProtKB" id="Q7Z4G4"/>
    </source>
</evidence>
<evidence type="ECO:0000255" key="2">
    <source>
        <dbReference type="PROSITE-ProRule" id="PRU00959"/>
    </source>
</evidence>
<protein>
    <recommendedName>
        <fullName evidence="1">tRNA (guanine(10)-N(2))-methyltransferase TRMT11</fullName>
        <ecNumber evidence="1">2.1.1.214</ecNumber>
    </recommendedName>
    <alternativeName>
        <fullName evidence="1">tRNA methyltransferase 11 homolog</fullName>
    </alternativeName>
</protein>
<proteinExistence type="evidence at transcript level"/>
<sequence length="460" mass="53039">MAPPGILNRYLLLMAQEHLEFRLPEIKSLLSLFGGQFISSQETYGKSPFWILSIPSEDIARNLMKRTVCAKSIFELWGHGKCPEELYSSLKNYPVEKMVPFLHSDSTYKIKIHTFNKTLTQEEKVKRIDALEFLPFEGKVNLKKPQHVFSILEDYGLDPNHIPENPHNIYFGRWIADGQRELIESYSVKKRHFIGNTSMDAGLSFIMANHGKVKKNDIVFDPFVGTGGLLIASAHFGAYVYGTDIDYNTVHGLGKASRKNQKWRGPDENIRANLRQYGLEKYYLDVLVSDASKPSWRKGTYFDAIITDPPYGIRESTRRTGSQKEIPKGIEKCPESHVPVSLSYHLSDMFFDLLNFSAETLVLGGRLVYWLPVYTPEYTEEMVPWHPCLKLISNCEQKLSSHTSRRLITMEKVKEFENRDQYSHLLSDHFLLYQGHNSFREKYFSGVTKRIAKEEKSSQE</sequence>